<dbReference type="EMBL" id="CP000243">
    <property type="protein sequence ID" value="ABE09041.1"/>
    <property type="molecule type" value="Genomic_DNA"/>
</dbReference>
<dbReference type="RefSeq" id="WP_000059466.1">
    <property type="nucleotide sequence ID" value="NZ_CP064825.1"/>
</dbReference>
<dbReference type="SMR" id="Q1R6H3"/>
<dbReference type="GeneID" id="93778818"/>
<dbReference type="KEGG" id="eci:UTI89_C3595"/>
<dbReference type="HOGENOM" id="CLU_148518_0_0_6"/>
<dbReference type="Proteomes" id="UP000001952">
    <property type="component" value="Chromosome"/>
</dbReference>
<dbReference type="GO" id="GO:0022627">
    <property type="term" value="C:cytosolic small ribosomal subunit"/>
    <property type="evidence" value="ECO:0007669"/>
    <property type="project" value="TreeGrafter"/>
</dbReference>
<dbReference type="GO" id="GO:0019843">
    <property type="term" value="F:rRNA binding"/>
    <property type="evidence" value="ECO:0007669"/>
    <property type="project" value="UniProtKB-UniRule"/>
</dbReference>
<dbReference type="GO" id="GO:0003735">
    <property type="term" value="F:structural constituent of ribosome"/>
    <property type="evidence" value="ECO:0007669"/>
    <property type="project" value="InterPro"/>
</dbReference>
<dbReference type="GO" id="GO:0006412">
    <property type="term" value="P:translation"/>
    <property type="evidence" value="ECO:0007669"/>
    <property type="project" value="UniProtKB-UniRule"/>
</dbReference>
<dbReference type="CDD" id="cd00353">
    <property type="entry name" value="Ribosomal_S15p_S13e"/>
    <property type="match status" value="1"/>
</dbReference>
<dbReference type="FunFam" id="1.10.287.10:FF:000002">
    <property type="entry name" value="30S ribosomal protein S15"/>
    <property type="match status" value="1"/>
</dbReference>
<dbReference type="Gene3D" id="6.10.250.3130">
    <property type="match status" value="1"/>
</dbReference>
<dbReference type="Gene3D" id="1.10.287.10">
    <property type="entry name" value="S15/NS1, RNA-binding"/>
    <property type="match status" value="1"/>
</dbReference>
<dbReference type="HAMAP" id="MF_01343_B">
    <property type="entry name" value="Ribosomal_uS15_B"/>
    <property type="match status" value="1"/>
</dbReference>
<dbReference type="InterPro" id="IPR000589">
    <property type="entry name" value="Ribosomal_uS15"/>
</dbReference>
<dbReference type="InterPro" id="IPR005290">
    <property type="entry name" value="Ribosomal_uS15_bac-type"/>
</dbReference>
<dbReference type="InterPro" id="IPR009068">
    <property type="entry name" value="uS15_NS1_RNA-bd_sf"/>
</dbReference>
<dbReference type="NCBIfam" id="TIGR00952">
    <property type="entry name" value="S15_bact"/>
    <property type="match status" value="1"/>
</dbReference>
<dbReference type="PANTHER" id="PTHR23321">
    <property type="entry name" value="RIBOSOMAL PROTEIN S15, BACTERIAL AND ORGANELLAR"/>
    <property type="match status" value="1"/>
</dbReference>
<dbReference type="PANTHER" id="PTHR23321:SF26">
    <property type="entry name" value="SMALL RIBOSOMAL SUBUNIT PROTEIN US15M"/>
    <property type="match status" value="1"/>
</dbReference>
<dbReference type="Pfam" id="PF00312">
    <property type="entry name" value="Ribosomal_S15"/>
    <property type="match status" value="1"/>
</dbReference>
<dbReference type="SMART" id="SM01387">
    <property type="entry name" value="Ribosomal_S15"/>
    <property type="match status" value="1"/>
</dbReference>
<dbReference type="SUPFAM" id="SSF47060">
    <property type="entry name" value="S15/NS1 RNA-binding domain"/>
    <property type="match status" value="1"/>
</dbReference>
<dbReference type="PROSITE" id="PS00362">
    <property type="entry name" value="RIBOSOMAL_S15"/>
    <property type="match status" value="1"/>
</dbReference>
<feature type="chain" id="PRO_0000255493" description="Small ribosomal subunit protein uS15">
    <location>
        <begin position="1"/>
        <end position="89"/>
    </location>
</feature>
<sequence length="89" mass="10269">MSLSTEATAKIVSEFGRDANDTGSTEVQVALLTAQINHLQGHFAEHKKDHHSRRGLLRMVSQRRKLLDYLKRKDVARYTQLIERLGLRR</sequence>
<reference key="1">
    <citation type="journal article" date="2006" name="Proc. Natl. Acad. Sci. U.S.A.">
        <title>Identification of genes subject to positive selection in uropathogenic strains of Escherichia coli: a comparative genomics approach.</title>
        <authorList>
            <person name="Chen S.L."/>
            <person name="Hung C.-S."/>
            <person name="Xu J."/>
            <person name="Reigstad C.S."/>
            <person name="Magrini V."/>
            <person name="Sabo A."/>
            <person name="Blasiar D."/>
            <person name="Bieri T."/>
            <person name="Meyer R.R."/>
            <person name="Ozersky P."/>
            <person name="Armstrong J.R."/>
            <person name="Fulton R.S."/>
            <person name="Latreille J.P."/>
            <person name="Spieth J."/>
            <person name="Hooton T.M."/>
            <person name="Mardis E.R."/>
            <person name="Hultgren S.J."/>
            <person name="Gordon J.I."/>
        </authorList>
    </citation>
    <scope>NUCLEOTIDE SEQUENCE [LARGE SCALE GENOMIC DNA]</scope>
    <source>
        <strain>UTI89 / UPEC</strain>
    </source>
</reference>
<organism>
    <name type="scientific">Escherichia coli (strain UTI89 / UPEC)</name>
    <dbReference type="NCBI Taxonomy" id="364106"/>
    <lineage>
        <taxon>Bacteria</taxon>
        <taxon>Pseudomonadati</taxon>
        <taxon>Pseudomonadota</taxon>
        <taxon>Gammaproteobacteria</taxon>
        <taxon>Enterobacterales</taxon>
        <taxon>Enterobacteriaceae</taxon>
        <taxon>Escherichia</taxon>
    </lineage>
</organism>
<gene>
    <name evidence="1" type="primary">rpsO</name>
    <name type="ordered locus">UTI89_C3595</name>
</gene>
<protein>
    <recommendedName>
        <fullName evidence="1">Small ribosomal subunit protein uS15</fullName>
    </recommendedName>
    <alternativeName>
        <fullName evidence="2">30S ribosomal protein S15</fullName>
    </alternativeName>
</protein>
<accession>Q1R6H3</accession>
<name>RS15_ECOUT</name>
<keyword id="KW-0687">Ribonucleoprotein</keyword>
<keyword id="KW-0689">Ribosomal protein</keyword>
<keyword id="KW-0694">RNA-binding</keyword>
<keyword id="KW-0699">rRNA-binding</keyword>
<comment type="function">
    <text evidence="1">One of the primary rRNA binding proteins, it binds directly to 16S rRNA where it helps nucleate assembly of the platform of the 30S subunit by binding and bridging several RNA helices of the 16S rRNA.</text>
</comment>
<comment type="function">
    <text evidence="1">Forms an intersubunit bridge (bridge B4) with the 23S rRNA of the 50S subunit in the ribosome.</text>
</comment>
<comment type="subunit">
    <text evidence="1">Part of the 30S ribosomal subunit. Forms a bridge to the 50S subunit in the 70S ribosome, contacting the 23S rRNA.</text>
</comment>
<comment type="similarity">
    <text evidence="1">Belongs to the universal ribosomal protein uS15 family.</text>
</comment>
<evidence type="ECO:0000255" key="1">
    <source>
        <dbReference type="HAMAP-Rule" id="MF_01343"/>
    </source>
</evidence>
<evidence type="ECO:0000305" key="2"/>
<proteinExistence type="inferred from homology"/>